<keyword id="KW-0067">ATP-binding</keyword>
<keyword id="KW-0150">Chloroplast</keyword>
<keyword id="KW-0275">Fatty acid biosynthesis</keyword>
<keyword id="KW-0276">Fatty acid metabolism</keyword>
<keyword id="KW-0444">Lipid biosynthesis</keyword>
<keyword id="KW-0443">Lipid metabolism</keyword>
<keyword id="KW-0479">Metal-binding</keyword>
<keyword id="KW-0547">Nucleotide-binding</keyword>
<keyword id="KW-0934">Plastid</keyword>
<keyword id="KW-0808">Transferase</keyword>
<keyword id="KW-0862">Zinc</keyword>
<keyword id="KW-0863">Zinc-finger</keyword>
<gene>
    <name evidence="2" type="primary">accD</name>
</gene>
<comment type="function">
    <text evidence="2">Component of the acetyl coenzyme A carboxylase (ACC) complex. Biotin carboxylase (BC) catalyzes the carboxylation of biotin on its carrier protein (BCCP) and then the CO(2) group is transferred by the transcarboxylase to acetyl-CoA to form malonyl-CoA.</text>
</comment>
<comment type="catalytic activity">
    <reaction evidence="2">
        <text>N(6)-carboxybiotinyl-L-lysyl-[protein] + acetyl-CoA = N(6)-biotinyl-L-lysyl-[protein] + malonyl-CoA</text>
        <dbReference type="Rhea" id="RHEA:54728"/>
        <dbReference type="Rhea" id="RHEA-COMP:10505"/>
        <dbReference type="Rhea" id="RHEA-COMP:10506"/>
        <dbReference type="ChEBI" id="CHEBI:57288"/>
        <dbReference type="ChEBI" id="CHEBI:57384"/>
        <dbReference type="ChEBI" id="CHEBI:83144"/>
        <dbReference type="ChEBI" id="CHEBI:83145"/>
        <dbReference type="EC" id="2.1.3.15"/>
    </reaction>
</comment>
<comment type="cofactor">
    <cofactor evidence="2">
        <name>Zn(2+)</name>
        <dbReference type="ChEBI" id="CHEBI:29105"/>
    </cofactor>
    <text evidence="2">Binds 1 zinc ion per subunit.</text>
</comment>
<comment type="pathway">
    <text evidence="2">Lipid metabolism; malonyl-CoA biosynthesis; malonyl-CoA from acetyl-CoA: step 1/1.</text>
</comment>
<comment type="subunit">
    <text evidence="1">Acetyl-CoA carboxylase is a heterohexamer composed of biotin carboxyl carrier protein, biotin carboxylase and 2 subunits each of ACCase subunit alpha and ACCase plastid-coded subunit beta (accD).</text>
</comment>
<comment type="subcellular location">
    <subcellularLocation>
        <location evidence="2">Plastid</location>
        <location evidence="2">Chloroplast stroma</location>
    </subcellularLocation>
</comment>
<comment type="similarity">
    <text evidence="2">Belongs to the AccD/PCCB family.</text>
</comment>
<dbReference type="EC" id="2.1.3.15" evidence="2"/>
<dbReference type="EMBL" id="AJ271079">
    <property type="protein sequence ID" value="CAB67165.2"/>
    <property type="molecule type" value="Genomic_DNA"/>
</dbReference>
<dbReference type="RefSeq" id="NP_084700.2">
    <property type="nucleotide sequence ID" value="NC_002693.2"/>
</dbReference>
<dbReference type="SMR" id="Q9MTL3"/>
<dbReference type="GeneID" id="802793"/>
<dbReference type="UniPathway" id="UPA00655">
    <property type="reaction ID" value="UER00711"/>
</dbReference>
<dbReference type="GO" id="GO:0009317">
    <property type="term" value="C:acetyl-CoA carboxylase complex"/>
    <property type="evidence" value="ECO:0007669"/>
    <property type="project" value="InterPro"/>
</dbReference>
<dbReference type="GO" id="GO:0009570">
    <property type="term" value="C:chloroplast stroma"/>
    <property type="evidence" value="ECO:0007669"/>
    <property type="project" value="UniProtKB-SubCell"/>
</dbReference>
<dbReference type="GO" id="GO:0003989">
    <property type="term" value="F:acetyl-CoA carboxylase activity"/>
    <property type="evidence" value="ECO:0007669"/>
    <property type="project" value="InterPro"/>
</dbReference>
<dbReference type="GO" id="GO:0005524">
    <property type="term" value="F:ATP binding"/>
    <property type="evidence" value="ECO:0007669"/>
    <property type="project" value="UniProtKB-KW"/>
</dbReference>
<dbReference type="GO" id="GO:0016743">
    <property type="term" value="F:carboxyl- or carbamoyltransferase activity"/>
    <property type="evidence" value="ECO:0007669"/>
    <property type="project" value="UniProtKB-UniRule"/>
</dbReference>
<dbReference type="GO" id="GO:0008270">
    <property type="term" value="F:zinc ion binding"/>
    <property type="evidence" value="ECO:0007669"/>
    <property type="project" value="UniProtKB-UniRule"/>
</dbReference>
<dbReference type="GO" id="GO:0006633">
    <property type="term" value="P:fatty acid biosynthetic process"/>
    <property type="evidence" value="ECO:0007669"/>
    <property type="project" value="UniProtKB-KW"/>
</dbReference>
<dbReference type="GO" id="GO:2001295">
    <property type="term" value="P:malonyl-CoA biosynthetic process"/>
    <property type="evidence" value="ECO:0007669"/>
    <property type="project" value="UniProtKB-UniRule"/>
</dbReference>
<dbReference type="Gene3D" id="3.90.226.10">
    <property type="entry name" value="2-enoyl-CoA Hydratase, Chain A, domain 1"/>
    <property type="match status" value="1"/>
</dbReference>
<dbReference type="HAMAP" id="MF_01395">
    <property type="entry name" value="AcetylCoA_CT_beta"/>
    <property type="match status" value="1"/>
</dbReference>
<dbReference type="InterPro" id="IPR034733">
    <property type="entry name" value="AcCoA_carboxyl_beta"/>
</dbReference>
<dbReference type="InterPro" id="IPR000438">
    <property type="entry name" value="Acetyl_CoA_COase_Trfase_b_su"/>
</dbReference>
<dbReference type="InterPro" id="IPR029045">
    <property type="entry name" value="ClpP/crotonase-like_dom_sf"/>
</dbReference>
<dbReference type="InterPro" id="IPR011762">
    <property type="entry name" value="COA_CT_N"/>
</dbReference>
<dbReference type="NCBIfam" id="TIGR00515">
    <property type="entry name" value="accD"/>
    <property type="match status" value="1"/>
</dbReference>
<dbReference type="PANTHER" id="PTHR42995">
    <property type="entry name" value="ACETYL-COENZYME A CARBOXYLASE CARBOXYL TRANSFERASE SUBUNIT BETA, CHLOROPLASTIC"/>
    <property type="match status" value="1"/>
</dbReference>
<dbReference type="PANTHER" id="PTHR42995:SF5">
    <property type="entry name" value="ACETYL-COENZYME A CARBOXYLASE CARBOXYL TRANSFERASE SUBUNIT BETA, CHLOROPLASTIC"/>
    <property type="match status" value="1"/>
</dbReference>
<dbReference type="Pfam" id="PF01039">
    <property type="entry name" value="Carboxyl_trans"/>
    <property type="match status" value="1"/>
</dbReference>
<dbReference type="PRINTS" id="PR01070">
    <property type="entry name" value="ACCCTRFRASEB"/>
</dbReference>
<dbReference type="SUPFAM" id="SSF52096">
    <property type="entry name" value="ClpP/crotonase"/>
    <property type="match status" value="1"/>
</dbReference>
<dbReference type="PROSITE" id="PS50980">
    <property type="entry name" value="COA_CT_NTER"/>
    <property type="match status" value="1"/>
</dbReference>
<proteinExistence type="inferred from homology"/>
<reference key="1">
    <citation type="journal article" date="2000" name="Mol. Gen. Genet.">
        <title>Complete nucleotide sequence of the Oenothera elata plastid chromosome, representing plastome I of the five distinguishable Euoenothera plastomes.</title>
        <authorList>
            <person name="Hupfer H."/>
            <person name="Swiatek M."/>
            <person name="Hornung S."/>
            <person name="Herrmann R.G."/>
            <person name="Maier R.M."/>
            <person name="Chiu W.-L."/>
            <person name="Sears B."/>
        </authorList>
    </citation>
    <scope>NUCLEOTIDE SEQUENCE [LARGE SCALE GENOMIC DNA]</scope>
    <source>
        <strain>cv. Johansen</strain>
    </source>
</reference>
<reference key="2">
    <citation type="journal article" date="2008" name="Nucleic Acids Res.">
        <title>The complete nucleotide sequences of the five genetically distinct plastid genomes of Oenothera, subsection Oenothera: I. Sequence evaluation and plastome evolution.</title>
        <authorList>
            <person name="Greiner S."/>
            <person name="Wang X."/>
            <person name="Rauwolf U."/>
            <person name="Silber M.V."/>
            <person name="Mayer K."/>
            <person name="Meurer J."/>
            <person name="Haberer G."/>
            <person name="Herrmann R.G."/>
        </authorList>
    </citation>
    <scope>SEQUENCE REVISION TO N-TERMINUS AND 80-94</scope>
</reference>
<sequence length="517" mass="59318">MKPTKPEGPKKPNKSNEEAEELEGDNKEDLEGPKKPNKSNEEAEELEGDNKEDLEGPKKPNKSNEEAEELEGDKQKDKKDGIFVLNYDDEYEEDLEYDDEYEEDLEYDDEYEEDLEYDDEEYDDEYEEDLEGDNKPHKEDLEGDNKPHKEDLEGDNKPHKEDLEGDKQKEEEEKQKEEEEKLKDCPWHWFHQIYPKHWGCPHRKHRDRKSVPAKERELVPAQSTKRDTDPDSEASLKSNYAHLWVHCKLCSGFNYKKILKSKNNVCEQCGSHLKMHSSDRIDLMLDPKTWAPMHEGLLSLDPIEFHSEKDPYKDRVASYKRKTGLSEAIQTGRGYLKRIHLGIGLMDFQFMGGSMGSVVGERITRLVEYATNRVLPLILVCASGGARMQEGSLSLMQMAKISSALSDYQFNRTVFYVALLTSPTTGGVTASFGMLGDIILAEPNAYIAFAGKRVIEQTLNIEVPEGSQTAEYLFDKGLFDQIVPRNPLKGSLSELFNFHGFVTLNSQVINIYNYLYS</sequence>
<feature type="chain" id="PRO_0000199787" description="Acetyl-coenzyme A carboxylase carboxyl transferase subunit beta, chloroplastic">
    <location>
        <begin position="1"/>
        <end position="517"/>
    </location>
</feature>
<feature type="domain" description="CoA carboxyltransferase N-terminal" evidence="3">
    <location>
        <begin position="243"/>
        <end position="514"/>
    </location>
</feature>
<feature type="zinc finger region" description="C4-type" evidence="2">
    <location>
        <begin position="247"/>
        <end position="269"/>
    </location>
</feature>
<feature type="region of interest" description="Disordered" evidence="4">
    <location>
        <begin position="1"/>
        <end position="179"/>
    </location>
</feature>
<feature type="region of interest" description="Disordered" evidence="4">
    <location>
        <begin position="204"/>
        <end position="234"/>
    </location>
</feature>
<feature type="compositionally biased region" description="Basic and acidic residues" evidence="4">
    <location>
        <begin position="1"/>
        <end position="17"/>
    </location>
</feature>
<feature type="compositionally biased region" description="Basic and acidic residues" evidence="4">
    <location>
        <begin position="24"/>
        <end position="41"/>
    </location>
</feature>
<feature type="compositionally biased region" description="Basic and acidic residues" evidence="4">
    <location>
        <begin position="48"/>
        <end position="65"/>
    </location>
</feature>
<feature type="compositionally biased region" description="Basic and acidic residues" evidence="4">
    <location>
        <begin position="72"/>
        <end position="81"/>
    </location>
</feature>
<feature type="compositionally biased region" description="Acidic residues" evidence="4">
    <location>
        <begin position="87"/>
        <end position="131"/>
    </location>
</feature>
<feature type="compositionally biased region" description="Basic and acidic residues" evidence="4">
    <location>
        <begin position="132"/>
        <end position="179"/>
    </location>
</feature>
<feature type="compositionally biased region" description="Basic and acidic residues" evidence="4">
    <location>
        <begin position="209"/>
        <end position="229"/>
    </location>
</feature>
<feature type="binding site" evidence="2">
    <location>
        <position position="247"/>
    </location>
    <ligand>
        <name>Zn(2+)</name>
        <dbReference type="ChEBI" id="CHEBI:29105"/>
    </ligand>
</feature>
<feature type="binding site" evidence="2">
    <location>
        <position position="250"/>
    </location>
    <ligand>
        <name>Zn(2+)</name>
        <dbReference type="ChEBI" id="CHEBI:29105"/>
    </ligand>
</feature>
<feature type="binding site" evidence="2">
    <location>
        <position position="266"/>
    </location>
    <ligand>
        <name>Zn(2+)</name>
        <dbReference type="ChEBI" id="CHEBI:29105"/>
    </ligand>
</feature>
<feature type="binding site" evidence="2">
    <location>
        <position position="269"/>
    </location>
    <ligand>
        <name>Zn(2+)</name>
        <dbReference type="ChEBI" id="CHEBI:29105"/>
    </ligand>
</feature>
<accession>Q9MTL3</accession>
<geneLocation type="chloroplast"/>
<name>ACCD_OENEH</name>
<evidence type="ECO:0000250" key="1"/>
<evidence type="ECO:0000255" key="2">
    <source>
        <dbReference type="HAMAP-Rule" id="MF_01395"/>
    </source>
</evidence>
<evidence type="ECO:0000255" key="3">
    <source>
        <dbReference type="PROSITE-ProRule" id="PRU01136"/>
    </source>
</evidence>
<evidence type="ECO:0000256" key="4">
    <source>
        <dbReference type="SAM" id="MobiDB-lite"/>
    </source>
</evidence>
<protein>
    <recommendedName>
        <fullName evidence="2">Acetyl-coenzyme A carboxylase carboxyl transferase subunit beta, chloroplastic</fullName>
        <shortName evidence="2">ACCase subunit beta</shortName>
        <shortName evidence="2">Acetyl-CoA carboxylase carboxyltransferase subunit beta</shortName>
        <ecNumber evidence="2">2.1.3.15</ecNumber>
    </recommendedName>
</protein>
<organism>
    <name type="scientific">Oenothera elata subsp. hookeri</name>
    <name type="common">Hooker's evening primrose</name>
    <name type="synonym">Oenothera hookeri</name>
    <dbReference type="NCBI Taxonomy" id="85636"/>
    <lineage>
        <taxon>Eukaryota</taxon>
        <taxon>Viridiplantae</taxon>
        <taxon>Streptophyta</taxon>
        <taxon>Embryophyta</taxon>
        <taxon>Tracheophyta</taxon>
        <taxon>Spermatophyta</taxon>
        <taxon>Magnoliopsida</taxon>
        <taxon>eudicotyledons</taxon>
        <taxon>Gunneridae</taxon>
        <taxon>Pentapetalae</taxon>
        <taxon>rosids</taxon>
        <taxon>malvids</taxon>
        <taxon>Myrtales</taxon>
        <taxon>Onagraceae</taxon>
        <taxon>Onagroideae</taxon>
        <taxon>Onagreae</taxon>
        <taxon>Oenothera</taxon>
    </lineage>
</organism>